<proteinExistence type="inferred from homology"/>
<gene>
    <name type="primary">mthl10</name>
    <name type="synonym">mth2</name>
    <name type="ORF">CG17061</name>
</gene>
<keyword id="KW-0025">Alternative splicing</keyword>
<keyword id="KW-1003">Cell membrane</keyword>
<keyword id="KW-1015">Disulfide bond</keyword>
<keyword id="KW-0297">G-protein coupled receptor</keyword>
<keyword id="KW-0325">Glycoprotein</keyword>
<keyword id="KW-0472">Membrane</keyword>
<keyword id="KW-0675">Receptor</keyword>
<keyword id="KW-1185">Reference proteome</keyword>
<keyword id="KW-0732">Signal</keyword>
<keyword id="KW-0807">Transducer</keyword>
<keyword id="KW-0812">Transmembrane</keyword>
<keyword id="KW-1133">Transmembrane helix</keyword>
<evidence type="ECO:0000250" key="1">
    <source>
        <dbReference type="UniProtKB" id="O97148"/>
    </source>
</evidence>
<evidence type="ECO:0000255" key="2"/>
<evidence type="ECO:0000305" key="3"/>
<sequence>MPKKIHQPGGSLYCGVTLLGVLCLVVFRLIPGIPFGTYVMAERDHYHTIDDPNVPCNFYDTVNLTGHRLFPNGSYDYYGTIVPAELVGTYDYIHSSLTERIEVREHVRGCVCKFKSCLNICCPWRQVFNSEVDGCIIDHSDNRTWPDPPMLNITFRNESTILVNMFTQFAIQSFRPCPKMFSLQPETNNWDDYLLFENGSMLRVDDKLLIRKNEFCMVPTYVNESDMFYTIHPANCDMQDDHSTVKIINSYAMMFSIPFMMLTIAVYLLIPELRNQHGKSLVCYLIGLSVGYSSLCYVQLYQVDATGVTCKVFGYTAYFFFMGAYMWLSVISFDLWHNFRGTRGINRFQEKKRFLFYSLYSWGIALVFLAFTYCAQQLTNLPANLKPGIGDGVYCWLDMSNWAAMIYFYGPILAIVVANTIMFIMTAIKIHGVQREMARIIASENSTKNLRTEKDKRFYRAWSNYRFGLFLRLFLIMGITWLTELISYFVGSDKGWSKLFYISDLANAMQGFLIFMLFVMKKKVKHLITNRCSSVRDGSNQRQSQYSTKTTSSSVANLSLHEKPSVEKPLVISSSVDPQKTTIFR</sequence>
<accession>Q9W0R5</accession>
<accession>Q7YWL1</accession>
<accession>Q86BK3</accession>
<accession>Q95NU7</accession>
<accession>Q95YN4</accession>
<reference key="1">
    <citation type="journal article" date="2000" name="Science">
        <title>The genome sequence of Drosophila melanogaster.</title>
        <authorList>
            <person name="Adams M.D."/>
            <person name="Celniker S.E."/>
            <person name="Holt R.A."/>
            <person name="Evans C.A."/>
            <person name="Gocayne J.D."/>
            <person name="Amanatides P.G."/>
            <person name="Scherer S.E."/>
            <person name="Li P.W."/>
            <person name="Hoskins R.A."/>
            <person name="Galle R.F."/>
            <person name="George R.A."/>
            <person name="Lewis S.E."/>
            <person name="Richards S."/>
            <person name="Ashburner M."/>
            <person name="Henderson S.N."/>
            <person name="Sutton G.G."/>
            <person name="Wortman J.R."/>
            <person name="Yandell M.D."/>
            <person name="Zhang Q."/>
            <person name="Chen L.X."/>
            <person name="Brandon R.C."/>
            <person name="Rogers Y.-H.C."/>
            <person name="Blazej R.G."/>
            <person name="Champe M."/>
            <person name="Pfeiffer B.D."/>
            <person name="Wan K.H."/>
            <person name="Doyle C."/>
            <person name="Baxter E.G."/>
            <person name="Helt G."/>
            <person name="Nelson C.R."/>
            <person name="Miklos G.L.G."/>
            <person name="Abril J.F."/>
            <person name="Agbayani A."/>
            <person name="An H.-J."/>
            <person name="Andrews-Pfannkoch C."/>
            <person name="Baldwin D."/>
            <person name="Ballew R.M."/>
            <person name="Basu A."/>
            <person name="Baxendale J."/>
            <person name="Bayraktaroglu L."/>
            <person name="Beasley E.M."/>
            <person name="Beeson K.Y."/>
            <person name="Benos P.V."/>
            <person name="Berman B.P."/>
            <person name="Bhandari D."/>
            <person name="Bolshakov S."/>
            <person name="Borkova D."/>
            <person name="Botchan M.R."/>
            <person name="Bouck J."/>
            <person name="Brokstein P."/>
            <person name="Brottier P."/>
            <person name="Burtis K.C."/>
            <person name="Busam D.A."/>
            <person name="Butler H."/>
            <person name="Cadieu E."/>
            <person name="Center A."/>
            <person name="Chandra I."/>
            <person name="Cherry J.M."/>
            <person name="Cawley S."/>
            <person name="Dahlke C."/>
            <person name="Davenport L.B."/>
            <person name="Davies P."/>
            <person name="de Pablos B."/>
            <person name="Delcher A."/>
            <person name="Deng Z."/>
            <person name="Mays A.D."/>
            <person name="Dew I."/>
            <person name="Dietz S.M."/>
            <person name="Dodson K."/>
            <person name="Doup L.E."/>
            <person name="Downes M."/>
            <person name="Dugan-Rocha S."/>
            <person name="Dunkov B.C."/>
            <person name="Dunn P."/>
            <person name="Durbin K.J."/>
            <person name="Evangelista C.C."/>
            <person name="Ferraz C."/>
            <person name="Ferriera S."/>
            <person name="Fleischmann W."/>
            <person name="Fosler C."/>
            <person name="Gabrielian A.E."/>
            <person name="Garg N.S."/>
            <person name="Gelbart W.M."/>
            <person name="Glasser K."/>
            <person name="Glodek A."/>
            <person name="Gong F."/>
            <person name="Gorrell J.H."/>
            <person name="Gu Z."/>
            <person name="Guan P."/>
            <person name="Harris M."/>
            <person name="Harris N.L."/>
            <person name="Harvey D.A."/>
            <person name="Heiman T.J."/>
            <person name="Hernandez J.R."/>
            <person name="Houck J."/>
            <person name="Hostin D."/>
            <person name="Houston K.A."/>
            <person name="Howland T.J."/>
            <person name="Wei M.-H."/>
            <person name="Ibegwam C."/>
            <person name="Jalali M."/>
            <person name="Kalush F."/>
            <person name="Karpen G.H."/>
            <person name="Ke Z."/>
            <person name="Kennison J.A."/>
            <person name="Ketchum K.A."/>
            <person name="Kimmel B.E."/>
            <person name="Kodira C.D."/>
            <person name="Kraft C.L."/>
            <person name="Kravitz S."/>
            <person name="Kulp D."/>
            <person name="Lai Z."/>
            <person name="Lasko P."/>
            <person name="Lei Y."/>
            <person name="Levitsky A.A."/>
            <person name="Li J.H."/>
            <person name="Li Z."/>
            <person name="Liang Y."/>
            <person name="Lin X."/>
            <person name="Liu X."/>
            <person name="Mattei B."/>
            <person name="McIntosh T.C."/>
            <person name="McLeod M.P."/>
            <person name="McPherson D."/>
            <person name="Merkulov G."/>
            <person name="Milshina N.V."/>
            <person name="Mobarry C."/>
            <person name="Morris J."/>
            <person name="Moshrefi A."/>
            <person name="Mount S.M."/>
            <person name="Moy M."/>
            <person name="Murphy B."/>
            <person name="Murphy L."/>
            <person name="Muzny D.M."/>
            <person name="Nelson D.L."/>
            <person name="Nelson D.R."/>
            <person name="Nelson K.A."/>
            <person name="Nixon K."/>
            <person name="Nusskern D.R."/>
            <person name="Pacleb J.M."/>
            <person name="Palazzolo M."/>
            <person name="Pittman G.S."/>
            <person name="Pan S."/>
            <person name="Pollard J."/>
            <person name="Puri V."/>
            <person name="Reese M.G."/>
            <person name="Reinert K."/>
            <person name="Remington K."/>
            <person name="Saunders R.D.C."/>
            <person name="Scheeler F."/>
            <person name="Shen H."/>
            <person name="Shue B.C."/>
            <person name="Siden-Kiamos I."/>
            <person name="Simpson M."/>
            <person name="Skupski M.P."/>
            <person name="Smith T.J."/>
            <person name="Spier E."/>
            <person name="Spradling A.C."/>
            <person name="Stapleton M."/>
            <person name="Strong R."/>
            <person name="Sun E."/>
            <person name="Svirskas R."/>
            <person name="Tector C."/>
            <person name="Turner R."/>
            <person name="Venter E."/>
            <person name="Wang A.H."/>
            <person name="Wang X."/>
            <person name="Wang Z.-Y."/>
            <person name="Wassarman D.A."/>
            <person name="Weinstock G.M."/>
            <person name="Weissenbach J."/>
            <person name="Williams S.M."/>
            <person name="Woodage T."/>
            <person name="Worley K.C."/>
            <person name="Wu D."/>
            <person name="Yang S."/>
            <person name="Yao Q.A."/>
            <person name="Ye J."/>
            <person name="Yeh R.-F."/>
            <person name="Zaveri J.S."/>
            <person name="Zhan M."/>
            <person name="Zhang G."/>
            <person name="Zhao Q."/>
            <person name="Zheng L."/>
            <person name="Zheng X.H."/>
            <person name="Zhong F.N."/>
            <person name="Zhong W."/>
            <person name="Zhou X."/>
            <person name="Zhu S.C."/>
            <person name="Zhu X."/>
            <person name="Smith H.O."/>
            <person name="Gibbs R.A."/>
            <person name="Myers E.W."/>
            <person name="Rubin G.M."/>
            <person name="Venter J.C."/>
        </authorList>
    </citation>
    <scope>NUCLEOTIDE SEQUENCE [LARGE SCALE GENOMIC DNA]</scope>
    <source>
        <strain>Berkeley</strain>
    </source>
</reference>
<reference key="2">
    <citation type="journal article" date="2002" name="Genome Biol.">
        <title>Annotation of the Drosophila melanogaster euchromatic genome: a systematic review.</title>
        <authorList>
            <person name="Misra S."/>
            <person name="Crosby M.A."/>
            <person name="Mungall C.J."/>
            <person name="Matthews B.B."/>
            <person name="Campbell K.S."/>
            <person name="Hradecky P."/>
            <person name="Huang Y."/>
            <person name="Kaminker J.S."/>
            <person name="Millburn G.H."/>
            <person name="Prochnik S.E."/>
            <person name="Smith C.D."/>
            <person name="Tupy J.L."/>
            <person name="Whitfield E.J."/>
            <person name="Bayraktaroglu L."/>
            <person name="Berman B.P."/>
            <person name="Bettencourt B.R."/>
            <person name="Celniker S.E."/>
            <person name="de Grey A.D.N.J."/>
            <person name="Drysdale R.A."/>
            <person name="Harris N.L."/>
            <person name="Richter J."/>
            <person name="Russo S."/>
            <person name="Schroeder A.J."/>
            <person name="Shu S.Q."/>
            <person name="Stapleton M."/>
            <person name="Yamada C."/>
            <person name="Ashburner M."/>
            <person name="Gelbart W.M."/>
            <person name="Rubin G.M."/>
            <person name="Lewis S.E."/>
        </authorList>
    </citation>
    <scope>GENOME REANNOTATION</scope>
    <scope>ALTERNATIVE SPLICING</scope>
    <source>
        <strain>Berkeley</strain>
    </source>
</reference>
<reference key="3">
    <citation type="journal article" date="2003" name="Mol. Ecol.">
        <title>Clines and adaptive evolution in the methuselah gene region in Drosophila melanogaster.</title>
        <authorList>
            <person name="Duvernell D.D."/>
            <person name="Schmidt P.S."/>
            <person name="Eanes W.F."/>
        </authorList>
    </citation>
    <scope>NUCLEOTIDE SEQUENCE [GENOMIC DNA] OF 40-585</scope>
    <source>
        <strain>CT97_1</strain>
        <strain>CT97_3</strain>
        <strain>CT97_4</strain>
        <strain>HFL97_15</strain>
        <strain>HFL97_16</strain>
        <strain>HFL97_8</strain>
        <strain>JFL97_1</strain>
        <strain>JFL97_5</strain>
        <strain>JFL97_9</strain>
        <strain>MA97_1</strain>
        <strain>MA97_4</strain>
        <strain>MA97_6</strain>
        <strain>MFL97_1</strain>
        <strain>VT97_1</strain>
        <strain>ZIM(H)23</strain>
        <strain>ZIM(H)26</strain>
        <strain>ZIM(H)39</strain>
        <strain>ZIM(H)44</strain>
        <strain>ZIM(S)15</strain>
        <strain>ZIM(S)24</strain>
        <strain>ZIM(S)35</strain>
        <strain>ZIM(S)37</strain>
        <strain>ZIM(S)49</strain>
    </source>
</reference>
<reference key="4">
    <citation type="journal article" date="2000" name="J. Cell Biol.">
        <title>Drosophila melanogaster G protein-coupled receptors.</title>
        <authorList>
            <person name="Brody T."/>
            <person name="Cravchik A."/>
        </authorList>
    </citation>
    <scope>REVIEW</scope>
</reference>
<organism>
    <name type="scientific">Drosophila melanogaster</name>
    <name type="common">Fruit fly</name>
    <dbReference type="NCBI Taxonomy" id="7227"/>
    <lineage>
        <taxon>Eukaryota</taxon>
        <taxon>Metazoa</taxon>
        <taxon>Ecdysozoa</taxon>
        <taxon>Arthropoda</taxon>
        <taxon>Hexapoda</taxon>
        <taxon>Insecta</taxon>
        <taxon>Pterygota</taxon>
        <taxon>Neoptera</taxon>
        <taxon>Endopterygota</taxon>
        <taxon>Diptera</taxon>
        <taxon>Brachycera</taxon>
        <taxon>Muscomorpha</taxon>
        <taxon>Ephydroidea</taxon>
        <taxon>Drosophilidae</taxon>
        <taxon>Drosophila</taxon>
        <taxon>Sophophora</taxon>
    </lineage>
</organism>
<protein>
    <recommendedName>
        <fullName>Probable G-protein coupled receptor Mth-like 10</fullName>
    </recommendedName>
    <alternativeName>
        <fullName>Protein methuselah-like 10</fullName>
    </alternativeName>
</protein>
<dbReference type="EMBL" id="AE014296">
    <property type="protein sequence ID" value="AAF47378.2"/>
    <property type="molecule type" value="Genomic_DNA"/>
</dbReference>
<dbReference type="EMBL" id="AE014296">
    <property type="protein sequence ID" value="AAO41210.2"/>
    <property type="molecule type" value="Genomic_DNA"/>
</dbReference>
<dbReference type="EMBL" id="AF300364">
    <property type="protein sequence ID" value="AAK97869.1"/>
    <property type="molecule type" value="Genomic_DNA"/>
</dbReference>
<dbReference type="EMBL" id="AF300363">
    <property type="protein sequence ID" value="AAK97869.1"/>
    <property type="status" value="JOINED"/>
    <property type="molecule type" value="Genomic_DNA"/>
</dbReference>
<dbReference type="EMBL" id="AF300366">
    <property type="protein sequence ID" value="AAK97870.1"/>
    <property type="molecule type" value="Genomic_DNA"/>
</dbReference>
<dbReference type="EMBL" id="AF300365">
    <property type="protein sequence ID" value="AAK97870.1"/>
    <property type="status" value="JOINED"/>
    <property type="molecule type" value="Genomic_DNA"/>
</dbReference>
<dbReference type="EMBL" id="AF300368">
    <property type="protein sequence ID" value="AAK97871.1"/>
    <property type="molecule type" value="Genomic_DNA"/>
</dbReference>
<dbReference type="EMBL" id="AF300367">
    <property type="protein sequence ID" value="AAK97871.1"/>
    <property type="status" value="JOINED"/>
    <property type="molecule type" value="Genomic_DNA"/>
</dbReference>
<dbReference type="EMBL" id="AF300370">
    <property type="protein sequence ID" value="AAK97872.1"/>
    <property type="molecule type" value="Genomic_DNA"/>
</dbReference>
<dbReference type="EMBL" id="AF300369">
    <property type="protein sequence ID" value="AAK97872.1"/>
    <property type="status" value="JOINED"/>
    <property type="molecule type" value="Genomic_DNA"/>
</dbReference>
<dbReference type="EMBL" id="AF300372">
    <property type="protein sequence ID" value="AAK97873.1"/>
    <property type="molecule type" value="Genomic_DNA"/>
</dbReference>
<dbReference type="EMBL" id="AF300371">
    <property type="protein sequence ID" value="AAK97873.1"/>
    <property type="status" value="JOINED"/>
    <property type="molecule type" value="Genomic_DNA"/>
</dbReference>
<dbReference type="EMBL" id="AF300374">
    <property type="protein sequence ID" value="AAK97874.1"/>
    <property type="molecule type" value="Genomic_DNA"/>
</dbReference>
<dbReference type="EMBL" id="AF300373">
    <property type="protein sequence ID" value="AAK97874.1"/>
    <property type="status" value="JOINED"/>
    <property type="molecule type" value="Genomic_DNA"/>
</dbReference>
<dbReference type="EMBL" id="AF300376">
    <property type="protein sequence ID" value="AAK97875.1"/>
    <property type="molecule type" value="Genomic_DNA"/>
</dbReference>
<dbReference type="EMBL" id="AF300375">
    <property type="protein sequence ID" value="AAK97875.1"/>
    <property type="status" value="JOINED"/>
    <property type="molecule type" value="Genomic_DNA"/>
</dbReference>
<dbReference type="EMBL" id="AF300378">
    <property type="protein sequence ID" value="AAK97876.1"/>
    <property type="molecule type" value="Genomic_DNA"/>
</dbReference>
<dbReference type="EMBL" id="AF300377">
    <property type="protein sequence ID" value="AAK97876.1"/>
    <property type="status" value="JOINED"/>
    <property type="molecule type" value="Genomic_DNA"/>
</dbReference>
<dbReference type="EMBL" id="AF300380">
    <property type="protein sequence ID" value="AAK97877.1"/>
    <property type="molecule type" value="Genomic_DNA"/>
</dbReference>
<dbReference type="EMBL" id="AF300379">
    <property type="protein sequence ID" value="AAK97877.1"/>
    <property type="status" value="JOINED"/>
    <property type="molecule type" value="Genomic_DNA"/>
</dbReference>
<dbReference type="EMBL" id="AF300382">
    <property type="protein sequence ID" value="AAK97878.1"/>
    <property type="molecule type" value="Genomic_DNA"/>
</dbReference>
<dbReference type="EMBL" id="AF300381">
    <property type="protein sequence ID" value="AAK97878.1"/>
    <property type="status" value="JOINED"/>
    <property type="molecule type" value="Genomic_DNA"/>
</dbReference>
<dbReference type="EMBL" id="AF300384">
    <property type="protein sequence ID" value="AAK97879.1"/>
    <property type="molecule type" value="Genomic_DNA"/>
</dbReference>
<dbReference type="EMBL" id="AF300383">
    <property type="protein sequence ID" value="AAK97879.1"/>
    <property type="status" value="JOINED"/>
    <property type="molecule type" value="Genomic_DNA"/>
</dbReference>
<dbReference type="EMBL" id="AF300386">
    <property type="protein sequence ID" value="AAK97880.1"/>
    <property type="molecule type" value="Genomic_DNA"/>
</dbReference>
<dbReference type="EMBL" id="AF300385">
    <property type="protein sequence ID" value="AAK97880.1"/>
    <property type="status" value="JOINED"/>
    <property type="molecule type" value="Genomic_DNA"/>
</dbReference>
<dbReference type="EMBL" id="AF300388">
    <property type="protein sequence ID" value="AAK97881.1"/>
    <property type="molecule type" value="Genomic_DNA"/>
</dbReference>
<dbReference type="EMBL" id="AF300387">
    <property type="protein sequence ID" value="AAK97881.1"/>
    <property type="status" value="JOINED"/>
    <property type="molecule type" value="Genomic_DNA"/>
</dbReference>
<dbReference type="EMBL" id="AF300390">
    <property type="protein sequence ID" value="AAK97882.1"/>
    <property type="molecule type" value="Genomic_DNA"/>
</dbReference>
<dbReference type="EMBL" id="AF300389">
    <property type="protein sequence ID" value="AAK97882.1"/>
    <property type="status" value="JOINED"/>
    <property type="molecule type" value="Genomic_DNA"/>
</dbReference>
<dbReference type="EMBL" id="AF300392">
    <property type="protein sequence ID" value="AAK97883.1"/>
    <property type="molecule type" value="Genomic_DNA"/>
</dbReference>
<dbReference type="EMBL" id="AF300391">
    <property type="protein sequence ID" value="AAK97883.1"/>
    <property type="status" value="JOINED"/>
    <property type="molecule type" value="Genomic_DNA"/>
</dbReference>
<dbReference type="EMBL" id="AF300394">
    <property type="protein sequence ID" value="AAK97884.1"/>
    <property type="molecule type" value="Genomic_DNA"/>
</dbReference>
<dbReference type="EMBL" id="AF300393">
    <property type="protein sequence ID" value="AAK97884.1"/>
    <property type="status" value="JOINED"/>
    <property type="molecule type" value="Genomic_DNA"/>
</dbReference>
<dbReference type="EMBL" id="AF300396">
    <property type="protein sequence ID" value="AAK97885.1"/>
    <property type="molecule type" value="Genomic_DNA"/>
</dbReference>
<dbReference type="EMBL" id="AF300395">
    <property type="protein sequence ID" value="AAK97885.1"/>
    <property type="status" value="JOINED"/>
    <property type="molecule type" value="Genomic_DNA"/>
</dbReference>
<dbReference type="EMBL" id="AF300398">
    <property type="protein sequence ID" value="AAK97886.1"/>
    <property type="molecule type" value="Genomic_DNA"/>
</dbReference>
<dbReference type="EMBL" id="AF300397">
    <property type="protein sequence ID" value="AAK97886.1"/>
    <property type="status" value="JOINED"/>
    <property type="molecule type" value="Genomic_DNA"/>
</dbReference>
<dbReference type="EMBL" id="AF300400">
    <property type="protein sequence ID" value="AAK97887.1"/>
    <property type="molecule type" value="Genomic_DNA"/>
</dbReference>
<dbReference type="EMBL" id="AF300399">
    <property type="protein sequence ID" value="AAK97887.1"/>
    <property type="status" value="JOINED"/>
    <property type="molecule type" value="Genomic_DNA"/>
</dbReference>
<dbReference type="EMBL" id="AF300402">
    <property type="protein sequence ID" value="AAK97888.1"/>
    <property type="molecule type" value="Genomic_DNA"/>
</dbReference>
<dbReference type="EMBL" id="AF300401">
    <property type="protein sequence ID" value="AAK97888.1"/>
    <property type="status" value="JOINED"/>
    <property type="molecule type" value="Genomic_DNA"/>
</dbReference>
<dbReference type="EMBL" id="AF300404">
    <property type="protein sequence ID" value="AAK97889.1"/>
    <property type="molecule type" value="Genomic_DNA"/>
</dbReference>
<dbReference type="EMBL" id="AF300403">
    <property type="protein sequence ID" value="AAK97889.1"/>
    <property type="status" value="JOINED"/>
    <property type="molecule type" value="Genomic_DNA"/>
</dbReference>
<dbReference type="EMBL" id="AF300406">
    <property type="protein sequence ID" value="AAK97890.1"/>
    <property type="molecule type" value="Genomic_DNA"/>
</dbReference>
<dbReference type="EMBL" id="AF300405">
    <property type="protein sequence ID" value="AAK97890.1"/>
    <property type="status" value="JOINED"/>
    <property type="molecule type" value="Genomic_DNA"/>
</dbReference>
<dbReference type="EMBL" id="AF300408">
    <property type="protein sequence ID" value="AAK97891.1"/>
    <property type="molecule type" value="Genomic_DNA"/>
</dbReference>
<dbReference type="EMBL" id="AF300407">
    <property type="protein sequence ID" value="AAK97891.1"/>
    <property type="status" value="JOINED"/>
    <property type="molecule type" value="Genomic_DNA"/>
</dbReference>
<dbReference type="RefSeq" id="NP_612030.2">
    <molecule id="Q9W0R5-2"/>
    <property type="nucleotide sequence ID" value="NM_138186.3"/>
</dbReference>
<dbReference type="RefSeq" id="NP_788446.2">
    <molecule id="Q9W0R5-1"/>
    <property type="nucleotide sequence ID" value="NM_176268.3"/>
</dbReference>
<dbReference type="SMR" id="Q9W0R5"/>
<dbReference type="BioGRID" id="63613">
    <property type="interactions" value="1"/>
</dbReference>
<dbReference type="FunCoup" id="Q9W0R5">
    <property type="interactions" value="122"/>
</dbReference>
<dbReference type="STRING" id="7227.FBpp0072472"/>
<dbReference type="TCDB" id="9.A.14.14.1">
    <property type="family name" value="the g-protein-coupled receptor (gpcr) family"/>
</dbReference>
<dbReference type="GlyCosmos" id="Q9W0R5">
    <property type="glycosylation" value="7 sites, No reported glycans"/>
</dbReference>
<dbReference type="GlyGen" id="Q9W0R5">
    <property type="glycosylation" value="7 sites"/>
</dbReference>
<dbReference type="PaxDb" id="7227-FBpp0072472"/>
<dbReference type="EnsemblMetazoa" id="FBtr0072572">
    <molecule id="Q9W0R5-2"/>
    <property type="protein sequence ID" value="FBpp0072471"/>
    <property type="gene ID" value="FBgn0035132"/>
</dbReference>
<dbReference type="EnsemblMetazoa" id="FBtr0072573">
    <molecule id="Q9W0R5-1"/>
    <property type="protein sequence ID" value="FBpp0072472"/>
    <property type="gene ID" value="FBgn0035132"/>
</dbReference>
<dbReference type="GeneID" id="38057"/>
<dbReference type="KEGG" id="dme:Dmel_CG17061"/>
<dbReference type="AGR" id="FB:FBgn0035132"/>
<dbReference type="CTD" id="38057"/>
<dbReference type="FlyBase" id="FBgn0035132">
    <property type="gene designation" value="mthl10"/>
</dbReference>
<dbReference type="VEuPathDB" id="VectorBase:FBgn0035132"/>
<dbReference type="eggNOG" id="ENOG502R627">
    <property type="taxonomic scope" value="Eukaryota"/>
</dbReference>
<dbReference type="GeneTree" id="ENSGT00940000166745"/>
<dbReference type="InParanoid" id="Q9W0R5"/>
<dbReference type="OMA" id="INAYAMM"/>
<dbReference type="OrthoDB" id="6134459at2759"/>
<dbReference type="PhylomeDB" id="Q9W0R5"/>
<dbReference type="BioGRID-ORCS" id="38057">
    <property type="hits" value="0 hits in 1 CRISPR screen"/>
</dbReference>
<dbReference type="GenomeRNAi" id="38057"/>
<dbReference type="PRO" id="PR:Q9W0R5"/>
<dbReference type="Proteomes" id="UP000000803">
    <property type="component" value="Chromosome 3L"/>
</dbReference>
<dbReference type="Bgee" id="FBgn0035132">
    <property type="expression patterns" value="Expressed in head cyst cell (Drosophila) in testis and 116 other cell types or tissues"/>
</dbReference>
<dbReference type="ExpressionAtlas" id="Q9W0R5">
    <property type="expression patterns" value="baseline and differential"/>
</dbReference>
<dbReference type="GO" id="GO:0016020">
    <property type="term" value="C:membrane"/>
    <property type="evidence" value="ECO:0000250"/>
    <property type="project" value="FlyBase"/>
</dbReference>
<dbReference type="GO" id="GO:0005886">
    <property type="term" value="C:plasma membrane"/>
    <property type="evidence" value="ECO:0000318"/>
    <property type="project" value="GO_Central"/>
</dbReference>
<dbReference type="GO" id="GO:0008528">
    <property type="term" value="F:G protein-coupled peptide receptor activity"/>
    <property type="evidence" value="ECO:0000318"/>
    <property type="project" value="GO_Central"/>
</dbReference>
<dbReference type="GO" id="GO:0004930">
    <property type="term" value="F:G protein-coupled receptor activity"/>
    <property type="evidence" value="ECO:0000250"/>
    <property type="project" value="FlyBase"/>
</dbReference>
<dbReference type="GO" id="GO:0007166">
    <property type="term" value="P:cell surface receptor signaling pathway"/>
    <property type="evidence" value="ECO:0007669"/>
    <property type="project" value="InterPro"/>
</dbReference>
<dbReference type="GO" id="GO:0008340">
    <property type="term" value="P:determination of adult lifespan"/>
    <property type="evidence" value="ECO:0000250"/>
    <property type="project" value="UniProtKB"/>
</dbReference>
<dbReference type="GO" id="GO:0007186">
    <property type="term" value="P:G protein-coupled receptor signaling pathway"/>
    <property type="evidence" value="ECO:0000250"/>
    <property type="project" value="FlyBase"/>
</dbReference>
<dbReference type="GO" id="GO:0042594">
    <property type="term" value="P:response to starvation"/>
    <property type="evidence" value="ECO:0000250"/>
    <property type="project" value="UniProtKB"/>
</dbReference>
<dbReference type="CDD" id="cd15039">
    <property type="entry name" value="7tmB3_Methuselah-like"/>
    <property type="match status" value="1"/>
</dbReference>
<dbReference type="CDD" id="cd00251">
    <property type="entry name" value="Mth_Ecto"/>
    <property type="match status" value="1"/>
</dbReference>
<dbReference type="FunFam" id="2.30.160.11:FF:000001">
    <property type="entry name" value="G-protein coupled receptor Mth"/>
    <property type="match status" value="1"/>
</dbReference>
<dbReference type="FunFam" id="1.20.1070.10:FF:000386">
    <property type="entry name" value="Methuselah-like 10, isoform D"/>
    <property type="match status" value="1"/>
</dbReference>
<dbReference type="Gene3D" id="2.30.160.11">
    <property type="match status" value="1"/>
</dbReference>
<dbReference type="Gene3D" id="1.20.1070.10">
    <property type="entry name" value="Rhodopsin 7-helix transmembrane proteins"/>
    <property type="match status" value="1"/>
</dbReference>
<dbReference type="InterPro" id="IPR017981">
    <property type="entry name" value="GPCR_2-like_7TM"/>
</dbReference>
<dbReference type="InterPro" id="IPR000832">
    <property type="entry name" value="GPCR_2_secretin-like"/>
</dbReference>
<dbReference type="InterPro" id="IPR044860">
    <property type="entry name" value="Methusela_ecto_dom_1"/>
</dbReference>
<dbReference type="InterPro" id="IPR010596">
    <property type="entry name" value="Methuselah_N_dom"/>
</dbReference>
<dbReference type="InterPro" id="IPR036272">
    <property type="entry name" value="Methuselah_N_sf"/>
</dbReference>
<dbReference type="InterPro" id="IPR051384">
    <property type="entry name" value="Mth_GPCR"/>
</dbReference>
<dbReference type="PANTHER" id="PTHR47154">
    <property type="entry name" value="G-PROTEIN COUPLED RECEPTOR MTH-RELATED"/>
    <property type="match status" value="1"/>
</dbReference>
<dbReference type="PANTHER" id="PTHR47154:SF2">
    <property type="entry name" value="G-PROTEIN COUPLED RECEPTOR MTH-RELATED"/>
    <property type="match status" value="1"/>
</dbReference>
<dbReference type="Pfam" id="PF00002">
    <property type="entry name" value="7tm_2"/>
    <property type="match status" value="1"/>
</dbReference>
<dbReference type="Pfam" id="PF06652">
    <property type="entry name" value="Methuselah_N"/>
    <property type="match status" value="1"/>
</dbReference>
<dbReference type="SUPFAM" id="SSF63877">
    <property type="entry name" value="Methuselah ectodomain"/>
    <property type="match status" value="1"/>
</dbReference>
<dbReference type="PROSITE" id="PS50261">
    <property type="entry name" value="G_PROTEIN_RECEP_F2_4"/>
    <property type="match status" value="1"/>
</dbReference>
<feature type="signal peptide" evidence="2">
    <location>
        <begin position="1"/>
        <end position="32"/>
    </location>
</feature>
<feature type="chain" id="PRO_0000013031" description="Probable G-protein coupled receptor Mth-like 10">
    <location>
        <begin position="33"/>
        <end position="585"/>
    </location>
</feature>
<feature type="topological domain" description="Extracellular" evidence="2">
    <location>
        <begin position="33"/>
        <end position="250"/>
    </location>
</feature>
<feature type="transmembrane region" description="Helical; Name=1" evidence="2">
    <location>
        <begin position="251"/>
        <end position="271"/>
    </location>
</feature>
<feature type="topological domain" description="Cytoplasmic" evidence="2">
    <location>
        <begin position="272"/>
        <end position="280"/>
    </location>
</feature>
<feature type="transmembrane region" description="Helical; Name=2" evidence="2">
    <location>
        <begin position="281"/>
        <end position="301"/>
    </location>
</feature>
<feature type="topological domain" description="Extracellular" evidence="2">
    <location>
        <begin position="302"/>
        <end position="312"/>
    </location>
</feature>
<feature type="transmembrane region" description="Helical; Name=3" evidence="2">
    <location>
        <begin position="313"/>
        <end position="333"/>
    </location>
</feature>
<feature type="topological domain" description="Cytoplasmic" evidence="2">
    <location>
        <begin position="334"/>
        <end position="353"/>
    </location>
</feature>
<feature type="transmembrane region" description="Helical; Name=4" evidence="2">
    <location>
        <begin position="354"/>
        <end position="374"/>
    </location>
</feature>
<feature type="topological domain" description="Extracellular" evidence="2">
    <location>
        <begin position="375"/>
        <end position="404"/>
    </location>
</feature>
<feature type="transmembrane region" description="Helical; Name=5" evidence="2">
    <location>
        <begin position="405"/>
        <end position="425"/>
    </location>
</feature>
<feature type="topological domain" description="Cytoplasmic" evidence="2">
    <location>
        <begin position="426"/>
        <end position="466"/>
    </location>
</feature>
<feature type="transmembrane region" description="Helical; Name=6" evidence="2">
    <location>
        <begin position="467"/>
        <end position="487"/>
    </location>
</feature>
<feature type="topological domain" description="Extracellular" evidence="2">
    <location>
        <begin position="488"/>
        <end position="498"/>
    </location>
</feature>
<feature type="transmembrane region" description="Helical; Name=7" evidence="2">
    <location>
        <begin position="499"/>
        <end position="519"/>
    </location>
</feature>
<feature type="topological domain" description="Cytoplasmic" evidence="2">
    <location>
        <begin position="520"/>
        <end position="585"/>
    </location>
</feature>
<feature type="glycosylation site" description="N-linked (GlcNAc...) asparagine" evidence="2">
    <location>
        <position position="63"/>
    </location>
</feature>
<feature type="glycosylation site" description="N-linked (GlcNAc...) asparagine" evidence="2">
    <location>
        <position position="72"/>
    </location>
</feature>
<feature type="glycosylation site" description="N-linked (GlcNAc...) asparagine" evidence="2">
    <location>
        <position position="142"/>
    </location>
</feature>
<feature type="glycosylation site" description="N-linked (GlcNAc...) asparagine" evidence="2">
    <location>
        <position position="152"/>
    </location>
</feature>
<feature type="glycosylation site" description="N-linked (GlcNAc...) asparagine" evidence="2">
    <location>
        <position position="157"/>
    </location>
</feature>
<feature type="glycosylation site" description="N-linked (GlcNAc...) asparagine" evidence="2">
    <location>
        <position position="198"/>
    </location>
</feature>
<feature type="glycosylation site" description="N-linked (GlcNAc...) asparagine" evidence="2">
    <location>
        <position position="223"/>
    </location>
</feature>
<feature type="disulfide bond" evidence="1">
    <location>
        <begin position="56"/>
        <end position="110"/>
    </location>
</feature>
<feature type="disulfide bond" evidence="1">
    <location>
        <begin position="112"/>
        <end position="117"/>
    </location>
</feature>
<feature type="disulfide bond" evidence="1">
    <location>
        <begin position="121"/>
        <end position="216"/>
    </location>
</feature>
<feature type="disulfide bond" evidence="1">
    <location>
        <begin position="122"/>
        <end position="135"/>
    </location>
</feature>
<feature type="disulfide bond" evidence="1">
    <location>
        <begin position="177"/>
        <end position="236"/>
    </location>
</feature>
<feature type="splice variant" id="VSP_030270" description="In isoform A." evidence="3">
    <location>
        <begin position="457"/>
        <end position="466"/>
    </location>
</feature>
<feature type="splice variant" id="VSP_030271" description="In isoform A." evidence="3">
    <original>CSSVRDGSNQRQSQYSTKTTSSSVANLSLHEKPSVEKPLVISSSVDPQKTTIFR</original>
    <variation>TIRVRSLRQTESVTMGPTSFSMKQRFMDASNQIRKLVVIRNAFANGSTSGIHSHEV</variation>
    <location>
        <begin position="532"/>
        <end position="585"/>
    </location>
</feature>
<feature type="sequence variant" description="In strain: ZIM(S)24.">
    <original>M</original>
    <variation>V</variation>
    <location>
        <position position="150"/>
    </location>
</feature>
<name>MTH10_DROME</name>
<comment type="subcellular location">
    <subcellularLocation>
        <location evidence="3">Cell membrane</location>
        <topology evidence="3">Multi-pass membrane protein</topology>
    </subcellularLocation>
</comment>
<comment type="alternative products">
    <event type="alternative splicing"/>
    <isoform>
        <id>Q9W0R5-1</id>
        <name>B</name>
        <sequence type="displayed"/>
    </isoform>
    <isoform>
        <id>Q9W0R5-2</id>
        <name>A</name>
        <sequence type="described" ref="VSP_030270 VSP_030271"/>
    </isoform>
</comment>
<comment type="similarity">
    <text evidence="3">Belongs to the G-protein coupled receptor 2 family. Mth subfamily.</text>
</comment>